<protein>
    <recommendedName>
        <fullName evidence="1">Aspartyl/glutamyl-tRNA(Asn/Gln) amidotransferase subunit C</fullName>
        <shortName evidence="1">Asp/Glu-ADT subunit C</shortName>
        <ecNumber evidence="1">6.3.5.-</ecNumber>
    </recommendedName>
</protein>
<accession>Q62MR5</accession>
<organism>
    <name type="scientific">Burkholderia mallei (strain ATCC 23344)</name>
    <dbReference type="NCBI Taxonomy" id="243160"/>
    <lineage>
        <taxon>Bacteria</taxon>
        <taxon>Pseudomonadati</taxon>
        <taxon>Pseudomonadota</taxon>
        <taxon>Betaproteobacteria</taxon>
        <taxon>Burkholderiales</taxon>
        <taxon>Burkholderiaceae</taxon>
        <taxon>Burkholderia</taxon>
        <taxon>pseudomallei group</taxon>
    </lineage>
</organism>
<dbReference type="EC" id="6.3.5.-" evidence="1"/>
<dbReference type="EMBL" id="CP000010">
    <property type="protein sequence ID" value="AAU48985.1"/>
    <property type="molecule type" value="Genomic_DNA"/>
</dbReference>
<dbReference type="RefSeq" id="WP_004189769.1">
    <property type="nucleotide sequence ID" value="NC_006348.1"/>
</dbReference>
<dbReference type="RefSeq" id="YP_102002.1">
    <property type="nucleotide sequence ID" value="NC_006348.1"/>
</dbReference>
<dbReference type="SMR" id="Q62MR5"/>
<dbReference type="GeneID" id="93058695"/>
<dbReference type="KEGG" id="bma:BMA0163"/>
<dbReference type="PATRIC" id="fig|243160.12.peg.161"/>
<dbReference type="eggNOG" id="COG0721">
    <property type="taxonomic scope" value="Bacteria"/>
</dbReference>
<dbReference type="HOGENOM" id="CLU_105899_2_2_4"/>
<dbReference type="Proteomes" id="UP000006693">
    <property type="component" value="Chromosome 1"/>
</dbReference>
<dbReference type="GO" id="GO:0050566">
    <property type="term" value="F:asparaginyl-tRNA synthase (glutamine-hydrolyzing) activity"/>
    <property type="evidence" value="ECO:0007669"/>
    <property type="project" value="RHEA"/>
</dbReference>
<dbReference type="GO" id="GO:0005524">
    <property type="term" value="F:ATP binding"/>
    <property type="evidence" value="ECO:0007669"/>
    <property type="project" value="UniProtKB-KW"/>
</dbReference>
<dbReference type="GO" id="GO:0050567">
    <property type="term" value="F:glutaminyl-tRNA synthase (glutamine-hydrolyzing) activity"/>
    <property type="evidence" value="ECO:0007669"/>
    <property type="project" value="UniProtKB-UniRule"/>
</dbReference>
<dbReference type="GO" id="GO:0070681">
    <property type="term" value="P:glutaminyl-tRNAGln biosynthesis via transamidation"/>
    <property type="evidence" value="ECO:0007669"/>
    <property type="project" value="TreeGrafter"/>
</dbReference>
<dbReference type="GO" id="GO:0006450">
    <property type="term" value="P:regulation of translational fidelity"/>
    <property type="evidence" value="ECO:0007669"/>
    <property type="project" value="InterPro"/>
</dbReference>
<dbReference type="GO" id="GO:0006412">
    <property type="term" value="P:translation"/>
    <property type="evidence" value="ECO:0007669"/>
    <property type="project" value="UniProtKB-UniRule"/>
</dbReference>
<dbReference type="Gene3D" id="1.10.20.60">
    <property type="entry name" value="Glu-tRNAGln amidotransferase C subunit, N-terminal domain"/>
    <property type="match status" value="1"/>
</dbReference>
<dbReference type="HAMAP" id="MF_00122">
    <property type="entry name" value="GatC"/>
    <property type="match status" value="1"/>
</dbReference>
<dbReference type="InterPro" id="IPR036113">
    <property type="entry name" value="Asp/Glu-ADT_sf_sub_c"/>
</dbReference>
<dbReference type="InterPro" id="IPR003837">
    <property type="entry name" value="GatC"/>
</dbReference>
<dbReference type="NCBIfam" id="TIGR00135">
    <property type="entry name" value="gatC"/>
    <property type="match status" value="1"/>
</dbReference>
<dbReference type="PANTHER" id="PTHR15004">
    <property type="entry name" value="GLUTAMYL-TRNA(GLN) AMIDOTRANSFERASE SUBUNIT C, MITOCHONDRIAL"/>
    <property type="match status" value="1"/>
</dbReference>
<dbReference type="PANTHER" id="PTHR15004:SF0">
    <property type="entry name" value="GLUTAMYL-TRNA(GLN) AMIDOTRANSFERASE SUBUNIT C, MITOCHONDRIAL"/>
    <property type="match status" value="1"/>
</dbReference>
<dbReference type="Pfam" id="PF02686">
    <property type="entry name" value="GatC"/>
    <property type="match status" value="1"/>
</dbReference>
<dbReference type="SUPFAM" id="SSF141000">
    <property type="entry name" value="Glu-tRNAGln amidotransferase C subunit"/>
    <property type="match status" value="1"/>
</dbReference>
<evidence type="ECO:0000255" key="1">
    <source>
        <dbReference type="HAMAP-Rule" id="MF_00122"/>
    </source>
</evidence>
<gene>
    <name evidence="1" type="primary">gatC</name>
    <name type="ordered locus">BMA0163</name>
</gene>
<proteinExistence type="inferred from homology"/>
<keyword id="KW-0067">ATP-binding</keyword>
<keyword id="KW-0436">Ligase</keyword>
<keyword id="KW-0547">Nucleotide-binding</keyword>
<keyword id="KW-0648">Protein biosynthesis</keyword>
<keyword id="KW-1185">Reference proteome</keyword>
<feature type="chain" id="PRO_1000016088" description="Aspartyl/glutamyl-tRNA(Asn/Gln) amidotransferase subunit C">
    <location>
        <begin position="1"/>
        <end position="99"/>
    </location>
</feature>
<reference key="1">
    <citation type="journal article" date="2004" name="Proc. Natl. Acad. Sci. U.S.A.">
        <title>Structural flexibility in the Burkholderia mallei genome.</title>
        <authorList>
            <person name="Nierman W.C."/>
            <person name="DeShazer D."/>
            <person name="Kim H.S."/>
            <person name="Tettelin H."/>
            <person name="Nelson K.E."/>
            <person name="Feldblyum T.V."/>
            <person name="Ulrich R.L."/>
            <person name="Ronning C.M."/>
            <person name="Brinkac L.M."/>
            <person name="Daugherty S.C."/>
            <person name="Davidsen T.D."/>
            <person name="DeBoy R.T."/>
            <person name="Dimitrov G."/>
            <person name="Dodson R.J."/>
            <person name="Durkin A.S."/>
            <person name="Gwinn M.L."/>
            <person name="Haft D.H."/>
            <person name="Khouri H.M."/>
            <person name="Kolonay J.F."/>
            <person name="Madupu R."/>
            <person name="Mohammoud Y."/>
            <person name="Nelson W.C."/>
            <person name="Radune D."/>
            <person name="Romero C.M."/>
            <person name="Sarria S."/>
            <person name="Selengut J."/>
            <person name="Shamblin C."/>
            <person name="Sullivan S.A."/>
            <person name="White O."/>
            <person name="Yu Y."/>
            <person name="Zafar N."/>
            <person name="Zhou L."/>
            <person name="Fraser C.M."/>
        </authorList>
    </citation>
    <scope>NUCLEOTIDE SEQUENCE [LARGE SCALE GENOMIC DNA]</scope>
    <source>
        <strain>ATCC 23344</strain>
    </source>
</reference>
<name>GATC_BURMA</name>
<comment type="function">
    <text evidence="1">Allows the formation of correctly charged Asn-tRNA(Asn) or Gln-tRNA(Gln) through the transamidation of misacylated Asp-tRNA(Asn) or Glu-tRNA(Gln) in organisms which lack either or both of asparaginyl-tRNA or glutaminyl-tRNA synthetases. The reaction takes place in the presence of glutamine and ATP through an activated phospho-Asp-tRNA(Asn) or phospho-Glu-tRNA(Gln).</text>
</comment>
<comment type="catalytic activity">
    <reaction evidence="1">
        <text>L-glutamyl-tRNA(Gln) + L-glutamine + ATP + H2O = L-glutaminyl-tRNA(Gln) + L-glutamate + ADP + phosphate + H(+)</text>
        <dbReference type="Rhea" id="RHEA:17521"/>
        <dbReference type="Rhea" id="RHEA-COMP:9681"/>
        <dbReference type="Rhea" id="RHEA-COMP:9684"/>
        <dbReference type="ChEBI" id="CHEBI:15377"/>
        <dbReference type="ChEBI" id="CHEBI:15378"/>
        <dbReference type="ChEBI" id="CHEBI:29985"/>
        <dbReference type="ChEBI" id="CHEBI:30616"/>
        <dbReference type="ChEBI" id="CHEBI:43474"/>
        <dbReference type="ChEBI" id="CHEBI:58359"/>
        <dbReference type="ChEBI" id="CHEBI:78520"/>
        <dbReference type="ChEBI" id="CHEBI:78521"/>
        <dbReference type="ChEBI" id="CHEBI:456216"/>
    </reaction>
</comment>
<comment type="catalytic activity">
    <reaction evidence="1">
        <text>L-aspartyl-tRNA(Asn) + L-glutamine + ATP + H2O = L-asparaginyl-tRNA(Asn) + L-glutamate + ADP + phosphate + 2 H(+)</text>
        <dbReference type="Rhea" id="RHEA:14513"/>
        <dbReference type="Rhea" id="RHEA-COMP:9674"/>
        <dbReference type="Rhea" id="RHEA-COMP:9677"/>
        <dbReference type="ChEBI" id="CHEBI:15377"/>
        <dbReference type="ChEBI" id="CHEBI:15378"/>
        <dbReference type="ChEBI" id="CHEBI:29985"/>
        <dbReference type="ChEBI" id="CHEBI:30616"/>
        <dbReference type="ChEBI" id="CHEBI:43474"/>
        <dbReference type="ChEBI" id="CHEBI:58359"/>
        <dbReference type="ChEBI" id="CHEBI:78515"/>
        <dbReference type="ChEBI" id="CHEBI:78516"/>
        <dbReference type="ChEBI" id="CHEBI:456216"/>
    </reaction>
</comment>
<comment type="subunit">
    <text evidence="1">Heterotrimer of A, B and C subunits.</text>
</comment>
<comment type="similarity">
    <text evidence="1">Belongs to the GatC family.</text>
</comment>
<sequence>MALTLTDVTRIAHLARLEMADADAERTLTQLNEFFGLVEQMQAVDTTGIAPLAHPIEQILEVAQRLREDAVTEHVNRDDNQRPAPAVQDGLYLVPKVIE</sequence>